<proteinExistence type="inferred from homology"/>
<evidence type="ECO:0000255" key="1">
    <source>
        <dbReference type="HAMAP-Rule" id="MF_00757"/>
    </source>
</evidence>
<keyword id="KW-0963">Cytoplasm</keyword>
<keyword id="KW-0255">Endonuclease</keyword>
<keyword id="KW-0378">Hydrolase</keyword>
<keyword id="KW-0479">Metal-binding</keyword>
<keyword id="KW-0540">Nuclease</keyword>
<keyword id="KW-0819">tRNA processing</keyword>
<keyword id="KW-0862">Zinc</keyword>
<accession>Q6KZ41</accession>
<comment type="function">
    <text evidence="1">Part of ribonuclease P, a protein complex that generates mature tRNA molecules by cleaving their 5'-ends.</text>
</comment>
<comment type="catalytic activity">
    <reaction evidence="1">
        <text>Endonucleolytic cleavage of RNA, removing 5'-extranucleotides from tRNA precursor.</text>
        <dbReference type="EC" id="3.1.26.5"/>
    </reaction>
</comment>
<comment type="cofactor">
    <cofactor evidence="1">
        <name>Zn(2+)</name>
        <dbReference type="ChEBI" id="CHEBI:29105"/>
    </cofactor>
    <text evidence="1">Binds 1 zinc ion per subunit.</text>
</comment>
<comment type="subunit">
    <text evidence="1">Consists of a catalytic RNA component and at least 4-5 protein subunits.</text>
</comment>
<comment type="subcellular location">
    <subcellularLocation>
        <location evidence="1">Cytoplasm</location>
    </subcellularLocation>
</comment>
<comment type="similarity">
    <text evidence="1">Belongs to the eukaryotic/archaeal RNase P protein component 4 family.</text>
</comment>
<reference key="1">
    <citation type="journal article" date="2004" name="Proc. Natl. Acad. Sci. U.S.A.">
        <title>Genome sequence of Picrophilus torridus and its implications for life around pH 0.</title>
        <authorList>
            <person name="Fuetterer O."/>
            <person name="Angelov A."/>
            <person name="Liesegang H."/>
            <person name="Gottschalk G."/>
            <person name="Schleper C."/>
            <person name="Schepers B."/>
            <person name="Dock C."/>
            <person name="Antranikian G."/>
            <person name="Liebl W."/>
        </authorList>
    </citation>
    <scope>NUCLEOTIDE SEQUENCE [LARGE SCALE GENOMIC DNA]</scope>
    <source>
        <strain>ATCC 700027 / DSM 9790 / JCM 10055 / NBRC 100828 / KAW 2/3</strain>
    </source>
</reference>
<protein>
    <recommendedName>
        <fullName evidence="1">Ribonuclease P protein component 4</fullName>
        <shortName evidence="1">RNase P component 4</shortName>
        <ecNumber evidence="1">3.1.26.5</ecNumber>
    </recommendedName>
    <alternativeName>
        <fullName evidence="1">Rpp21</fullName>
    </alternativeName>
</protein>
<feature type="chain" id="PRO_0000153857" description="Ribonuclease P protein component 4">
    <location>
        <begin position="1"/>
        <end position="91"/>
    </location>
</feature>
<feature type="binding site" evidence="1">
    <location>
        <position position="48"/>
    </location>
    <ligand>
        <name>Zn(2+)</name>
        <dbReference type="ChEBI" id="CHEBI:29105"/>
    </ligand>
</feature>
<feature type="binding site" evidence="1">
    <location>
        <position position="51"/>
    </location>
    <ligand>
        <name>Zn(2+)</name>
        <dbReference type="ChEBI" id="CHEBI:29105"/>
    </ligand>
</feature>
<feature type="binding site" evidence="1">
    <location>
        <position position="71"/>
    </location>
    <ligand>
        <name>Zn(2+)</name>
        <dbReference type="ChEBI" id="CHEBI:29105"/>
    </ligand>
</feature>
<feature type="binding site" evidence="1">
    <location>
        <position position="74"/>
    </location>
    <ligand>
        <name>Zn(2+)</name>
        <dbReference type="ChEBI" id="CHEBI:29105"/>
    </ligand>
</feature>
<gene>
    <name evidence="1" type="primary">rnp4</name>
    <name type="ordered locus">PTO1426</name>
</gene>
<name>RNP4_PICTO</name>
<sequence length="91" mass="10727">MNIALKRINYLINISRVSDNPERCIDLMEKISKRMDITLNHDIKLQYCKVCKMPYRNPVIRLKNGFVLIHCDHCGNTRRIKIRDHSVSSSK</sequence>
<organism>
    <name type="scientific">Picrophilus torridus (strain ATCC 700027 / DSM 9790 / JCM 10055 / NBRC 100828 / KAW 2/3)</name>
    <dbReference type="NCBI Taxonomy" id="1122961"/>
    <lineage>
        <taxon>Archaea</taxon>
        <taxon>Methanobacteriati</taxon>
        <taxon>Thermoplasmatota</taxon>
        <taxon>Thermoplasmata</taxon>
        <taxon>Thermoplasmatales</taxon>
        <taxon>Picrophilaceae</taxon>
        <taxon>Picrophilus</taxon>
    </lineage>
</organism>
<dbReference type="EC" id="3.1.26.5" evidence="1"/>
<dbReference type="EMBL" id="AE017261">
    <property type="protein sequence ID" value="AAT44011.1"/>
    <property type="molecule type" value="Genomic_DNA"/>
</dbReference>
<dbReference type="RefSeq" id="WP_011178227.1">
    <property type="nucleotide sequence ID" value="NC_005877.1"/>
</dbReference>
<dbReference type="SMR" id="Q6KZ41"/>
<dbReference type="STRING" id="263820.PTO1426"/>
<dbReference type="PaxDb" id="263820-PTO1426"/>
<dbReference type="GeneID" id="2844018"/>
<dbReference type="KEGG" id="pto:PTO1426"/>
<dbReference type="eggNOG" id="arCOG04345">
    <property type="taxonomic scope" value="Archaea"/>
</dbReference>
<dbReference type="HOGENOM" id="CLU_079140_3_1_2"/>
<dbReference type="InParanoid" id="Q6KZ41"/>
<dbReference type="OrthoDB" id="10058at2157"/>
<dbReference type="Proteomes" id="UP000000438">
    <property type="component" value="Chromosome"/>
</dbReference>
<dbReference type="GO" id="GO:0005737">
    <property type="term" value="C:cytoplasm"/>
    <property type="evidence" value="ECO:0007669"/>
    <property type="project" value="UniProtKB-SubCell"/>
</dbReference>
<dbReference type="GO" id="GO:0030677">
    <property type="term" value="C:ribonuclease P complex"/>
    <property type="evidence" value="ECO:0007669"/>
    <property type="project" value="UniProtKB-UniRule"/>
</dbReference>
<dbReference type="GO" id="GO:0004526">
    <property type="term" value="F:ribonuclease P activity"/>
    <property type="evidence" value="ECO:0007669"/>
    <property type="project" value="UniProtKB-UniRule"/>
</dbReference>
<dbReference type="GO" id="GO:0008270">
    <property type="term" value="F:zinc ion binding"/>
    <property type="evidence" value="ECO:0007669"/>
    <property type="project" value="UniProtKB-UniRule"/>
</dbReference>
<dbReference type="GO" id="GO:0001682">
    <property type="term" value="P:tRNA 5'-leader removal"/>
    <property type="evidence" value="ECO:0007669"/>
    <property type="project" value="UniProtKB-UniRule"/>
</dbReference>
<dbReference type="HAMAP" id="MF_00757">
    <property type="entry name" value="RNase_P_4"/>
    <property type="match status" value="1"/>
</dbReference>
<dbReference type="InterPro" id="IPR016432">
    <property type="entry name" value="RNP4"/>
</dbReference>
<dbReference type="PIRSF" id="PIRSF004878">
    <property type="entry name" value="RNase_P_4"/>
    <property type="match status" value="1"/>
</dbReference>